<proteinExistence type="inferred from homology"/>
<protein>
    <recommendedName>
        <fullName evidence="1">ATP synthase subunit b</fullName>
    </recommendedName>
    <alternativeName>
        <fullName evidence="1">ATP synthase F(0) sector subunit b</fullName>
    </alternativeName>
    <alternativeName>
        <fullName evidence="1">ATPase subunit I</fullName>
    </alternativeName>
    <alternativeName>
        <fullName evidence="1">F-type ATPase subunit b</fullName>
        <shortName evidence="1">F-ATPase subunit b</shortName>
    </alternativeName>
</protein>
<gene>
    <name evidence="1" type="primary">atpF</name>
    <name type="ordered locus">BPEN_004</name>
</gene>
<reference key="1">
    <citation type="journal article" date="2005" name="Genome Res.">
        <title>Genome sequence of Blochmannia pennsylvanicus indicates parallel evolutionary trends among bacterial mutualists of insects.</title>
        <authorList>
            <person name="Degnan P.H."/>
            <person name="Lazarus A.B."/>
            <person name="Wernegreen J.J."/>
        </authorList>
    </citation>
    <scope>NUCLEOTIDE SEQUENCE [LARGE SCALE GENOMIC DNA]</scope>
    <source>
        <strain>BPEN</strain>
    </source>
</reference>
<dbReference type="EMBL" id="CP000016">
    <property type="protein sequence ID" value="AAZ40654.1"/>
    <property type="molecule type" value="Genomic_DNA"/>
</dbReference>
<dbReference type="RefSeq" id="WP_011282560.1">
    <property type="nucleotide sequence ID" value="NC_007292.1"/>
</dbReference>
<dbReference type="SMR" id="Q494C7"/>
<dbReference type="STRING" id="291272.BPEN_004"/>
<dbReference type="KEGG" id="bpn:BPEN_004"/>
<dbReference type="eggNOG" id="COG0711">
    <property type="taxonomic scope" value="Bacteria"/>
</dbReference>
<dbReference type="HOGENOM" id="CLU_079215_4_5_6"/>
<dbReference type="OrthoDB" id="9788020at2"/>
<dbReference type="Proteomes" id="UP000007794">
    <property type="component" value="Chromosome"/>
</dbReference>
<dbReference type="GO" id="GO:0005886">
    <property type="term" value="C:plasma membrane"/>
    <property type="evidence" value="ECO:0007669"/>
    <property type="project" value="UniProtKB-SubCell"/>
</dbReference>
<dbReference type="GO" id="GO:0045259">
    <property type="term" value="C:proton-transporting ATP synthase complex"/>
    <property type="evidence" value="ECO:0007669"/>
    <property type="project" value="UniProtKB-KW"/>
</dbReference>
<dbReference type="GO" id="GO:0046933">
    <property type="term" value="F:proton-transporting ATP synthase activity, rotational mechanism"/>
    <property type="evidence" value="ECO:0007669"/>
    <property type="project" value="UniProtKB-UniRule"/>
</dbReference>
<dbReference type="GO" id="GO:0046961">
    <property type="term" value="F:proton-transporting ATPase activity, rotational mechanism"/>
    <property type="evidence" value="ECO:0007669"/>
    <property type="project" value="TreeGrafter"/>
</dbReference>
<dbReference type="CDD" id="cd06503">
    <property type="entry name" value="ATP-synt_Fo_b"/>
    <property type="match status" value="1"/>
</dbReference>
<dbReference type="FunFam" id="1.20.5.620:FF:000001">
    <property type="entry name" value="ATP synthase subunit b"/>
    <property type="match status" value="1"/>
</dbReference>
<dbReference type="Gene3D" id="1.20.5.620">
    <property type="entry name" value="F1F0 ATP synthase subunit B, membrane domain"/>
    <property type="match status" value="1"/>
</dbReference>
<dbReference type="HAMAP" id="MF_01398">
    <property type="entry name" value="ATP_synth_b_bprime"/>
    <property type="match status" value="1"/>
</dbReference>
<dbReference type="InterPro" id="IPR028987">
    <property type="entry name" value="ATP_synth_B-like_membr_sf"/>
</dbReference>
<dbReference type="InterPro" id="IPR002146">
    <property type="entry name" value="ATP_synth_b/b'su_bac/chlpt"/>
</dbReference>
<dbReference type="InterPro" id="IPR005864">
    <property type="entry name" value="ATP_synth_F0_bsu_bac"/>
</dbReference>
<dbReference type="InterPro" id="IPR050059">
    <property type="entry name" value="ATP_synthase_B_chain"/>
</dbReference>
<dbReference type="NCBIfam" id="TIGR01144">
    <property type="entry name" value="ATP_synt_b"/>
    <property type="match status" value="1"/>
</dbReference>
<dbReference type="NCBIfam" id="NF004411">
    <property type="entry name" value="PRK05759.1-2"/>
    <property type="match status" value="1"/>
</dbReference>
<dbReference type="NCBIfam" id="NF004413">
    <property type="entry name" value="PRK05759.1-4"/>
    <property type="match status" value="1"/>
</dbReference>
<dbReference type="PANTHER" id="PTHR33445:SF1">
    <property type="entry name" value="ATP SYNTHASE SUBUNIT B"/>
    <property type="match status" value="1"/>
</dbReference>
<dbReference type="PANTHER" id="PTHR33445">
    <property type="entry name" value="ATP SYNTHASE SUBUNIT B', CHLOROPLASTIC"/>
    <property type="match status" value="1"/>
</dbReference>
<dbReference type="Pfam" id="PF00430">
    <property type="entry name" value="ATP-synt_B"/>
    <property type="match status" value="1"/>
</dbReference>
<dbReference type="SUPFAM" id="SSF81573">
    <property type="entry name" value="F1F0 ATP synthase subunit B, membrane domain"/>
    <property type="match status" value="1"/>
</dbReference>
<name>ATPF_BLOPB</name>
<sequence length="160" mass="18711">MNLNATILGQTISFVLFVWFCMKYVWYPFISIIEKRQKEISDNLVSATHAKTESERVNAEALLCLRQARVKAQEIIKQANKCKMQIINEAKHEAEKEQSRILSQAREQIIYERKRVTDELRKQISELVIEGTEKVIEHSINEMIDIDLLNNIINTLSYKD</sequence>
<organism>
    <name type="scientific">Blochmanniella pennsylvanica (strain BPEN)</name>
    <dbReference type="NCBI Taxonomy" id="291272"/>
    <lineage>
        <taxon>Bacteria</taxon>
        <taxon>Pseudomonadati</taxon>
        <taxon>Pseudomonadota</taxon>
        <taxon>Gammaproteobacteria</taxon>
        <taxon>Enterobacterales</taxon>
        <taxon>Enterobacteriaceae</taxon>
        <taxon>ant endosymbionts</taxon>
        <taxon>Candidatus Blochmanniella</taxon>
    </lineage>
</organism>
<comment type="function">
    <text evidence="1">F(1)F(0) ATP synthase produces ATP from ADP in the presence of a proton or sodium gradient. F-type ATPases consist of two structural domains, F(1) containing the extramembraneous catalytic core and F(0) containing the membrane proton channel, linked together by a central stalk and a peripheral stalk. During catalysis, ATP synthesis in the catalytic domain of F(1) is coupled via a rotary mechanism of the central stalk subunits to proton translocation.</text>
</comment>
<comment type="function">
    <text evidence="1">Component of the F(0) channel, it forms part of the peripheral stalk, linking F(1) to F(0).</text>
</comment>
<comment type="subunit">
    <text evidence="1">F-type ATPases have 2 components, F(1) - the catalytic core - and F(0) - the membrane proton channel. F(1) has five subunits: alpha(3), beta(3), gamma(1), delta(1), epsilon(1). F(0) has three main subunits: a(1), b(2) and c(10-14). The alpha and beta chains form an alternating ring which encloses part of the gamma chain. F(1) is attached to F(0) by a central stalk formed by the gamma and epsilon chains, while a peripheral stalk is formed by the delta and b chains.</text>
</comment>
<comment type="subcellular location">
    <subcellularLocation>
        <location evidence="1">Cell inner membrane</location>
        <topology evidence="1">Single-pass membrane protein</topology>
    </subcellularLocation>
</comment>
<comment type="similarity">
    <text evidence="1">Belongs to the ATPase B chain family.</text>
</comment>
<accession>Q494C7</accession>
<feature type="chain" id="PRO_0000368356" description="ATP synthase subunit b">
    <location>
        <begin position="1"/>
        <end position="160"/>
    </location>
</feature>
<feature type="transmembrane region" description="Helical" evidence="1">
    <location>
        <begin position="12"/>
        <end position="32"/>
    </location>
</feature>
<evidence type="ECO:0000255" key="1">
    <source>
        <dbReference type="HAMAP-Rule" id="MF_01398"/>
    </source>
</evidence>
<keyword id="KW-0066">ATP synthesis</keyword>
<keyword id="KW-0997">Cell inner membrane</keyword>
<keyword id="KW-1003">Cell membrane</keyword>
<keyword id="KW-0138">CF(0)</keyword>
<keyword id="KW-0375">Hydrogen ion transport</keyword>
<keyword id="KW-0406">Ion transport</keyword>
<keyword id="KW-0472">Membrane</keyword>
<keyword id="KW-1185">Reference proteome</keyword>
<keyword id="KW-0812">Transmembrane</keyword>
<keyword id="KW-1133">Transmembrane helix</keyword>
<keyword id="KW-0813">Transport</keyword>